<organism>
    <name type="scientific">Legionella pneumophila (strain Corby)</name>
    <dbReference type="NCBI Taxonomy" id="400673"/>
    <lineage>
        <taxon>Bacteria</taxon>
        <taxon>Pseudomonadati</taxon>
        <taxon>Pseudomonadota</taxon>
        <taxon>Gammaproteobacteria</taxon>
        <taxon>Legionellales</taxon>
        <taxon>Legionellaceae</taxon>
        <taxon>Legionella</taxon>
    </lineage>
</organism>
<feature type="chain" id="PRO_0000381439" description="Biotin synthase">
    <location>
        <begin position="1"/>
        <end position="315"/>
    </location>
</feature>
<feature type="domain" description="Radical SAM core" evidence="2">
    <location>
        <begin position="39"/>
        <end position="266"/>
    </location>
</feature>
<feature type="binding site" evidence="1">
    <location>
        <position position="54"/>
    </location>
    <ligand>
        <name>[4Fe-4S] cluster</name>
        <dbReference type="ChEBI" id="CHEBI:49883"/>
        <note>4Fe-4S-S-AdoMet</note>
    </ligand>
</feature>
<feature type="binding site" evidence="1">
    <location>
        <position position="58"/>
    </location>
    <ligand>
        <name>[4Fe-4S] cluster</name>
        <dbReference type="ChEBI" id="CHEBI:49883"/>
        <note>4Fe-4S-S-AdoMet</note>
    </ligand>
</feature>
<feature type="binding site" evidence="1">
    <location>
        <position position="61"/>
    </location>
    <ligand>
        <name>[4Fe-4S] cluster</name>
        <dbReference type="ChEBI" id="CHEBI:49883"/>
        <note>4Fe-4S-S-AdoMet</note>
    </ligand>
</feature>
<feature type="binding site" evidence="1">
    <location>
        <position position="98"/>
    </location>
    <ligand>
        <name>[2Fe-2S] cluster</name>
        <dbReference type="ChEBI" id="CHEBI:190135"/>
    </ligand>
</feature>
<feature type="binding site" evidence="1">
    <location>
        <position position="129"/>
    </location>
    <ligand>
        <name>[2Fe-2S] cluster</name>
        <dbReference type="ChEBI" id="CHEBI:190135"/>
    </ligand>
</feature>
<feature type="binding site" evidence="1">
    <location>
        <position position="189"/>
    </location>
    <ligand>
        <name>[2Fe-2S] cluster</name>
        <dbReference type="ChEBI" id="CHEBI:190135"/>
    </ligand>
</feature>
<feature type="binding site" evidence="1">
    <location>
        <position position="261"/>
    </location>
    <ligand>
        <name>[2Fe-2S] cluster</name>
        <dbReference type="ChEBI" id="CHEBI:190135"/>
    </ligand>
</feature>
<comment type="function">
    <text evidence="1">Catalyzes the conversion of dethiobiotin (DTB) to biotin by the insertion of a sulfur atom into dethiobiotin via a radical-based mechanism.</text>
</comment>
<comment type="catalytic activity">
    <reaction evidence="1">
        <text>(4R,5S)-dethiobiotin + (sulfur carrier)-SH + 2 reduced [2Fe-2S]-[ferredoxin] + 2 S-adenosyl-L-methionine = (sulfur carrier)-H + biotin + 2 5'-deoxyadenosine + 2 L-methionine + 2 oxidized [2Fe-2S]-[ferredoxin]</text>
        <dbReference type="Rhea" id="RHEA:22060"/>
        <dbReference type="Rhea" id="RHEA-COMP:10000"/>
        <dbReference type="Rhea" id="RHEA-COMP:10001"/>
        <dbReference type="Rhea" id="RHEA-COMP:14737"/>
        <dbReference type="Rhea" id="RHEA-COMP:14739"/>
        <dbReference type="ChEBI" id="CHEBI:17319"/>
        <dbReference type="ChEBI" id="CHEBI:29917"/>
        <dbReference type="ChEBI" id="CHEBI:33737"/>
        <dbReference type="ChEBI" id="CHEBI:33738"/>
        <dbReference type="ChEBI" id="CHEBI:57586"/>
        <dbReference type="ChEBI" id="CHEBI:57844"/>
        <dbReference type="ChEBI" id="CHEBI:59789"/>
        <dbReference type="ChEBI" id="CHEBI:64428"/>
        <dbReference type="ChEBI" id="CHEBI:149473"/>
        <dbReference type="EC" id="2.8.1.6"/>
    </reaction>
</comment>
<comment type="cofactor">
    <cofactor evidence="1">
        <name>[4Fe-4S] cluster</name>
        <dbReference type="ChEBI" id="CHEBI:49883"/>
    </cofactor>
    <text evidence="1">Binds 1 [4Fe-4S] cluster. The cluster is coordinated with 3 cysteines and an exchangeable S-adenosyl-L-methionine.</text>
</comment>
<comment type="cofactor">
    <cofactor evidence="1">
        <name>[2Fe-2S] cluster</name>
        <dbReference type="ChEBI" id="CHEBI:190135"/>
    </cofactor>
    <text evidence="1">Binds 1 [2Fe-2S] cluster. The cluster is coordinated with 3 cysteines and 1 arginine.</text>
</comment>
<comment type="pathway">
    <text evidence="1">Cofactor biosynthesis; biotin biosynthesis; biotin from 7,8-diaminononanoate: step 2/2.</text>
</comment>
<comment type="subunit">
    <text evidence="1">Homodimer.</text>
</comment>
<comment type="similarity">
    <text evidence="1">Belongs to the radical SAM superfamily. Biotin synthase family.</text>
</comment>
<keyword id="KW-0001">2Fe-2S</keyword>
<keyword id="KW-0004">4Fe-4S</keyword>
<keyword id="KW-0093">Biotin biosynthesis</keyword>
<keyword id="KW-0408">Iron</keyword>
<keyword id="KW-0411">Iron-sulfur</keyword>
<keyword id="KW-0479">Metal-binding</keyword>
<keyword id="KW-0949">S-adenosyl-L-methionine</keyword>
<keyword id="KW-0808">Transferase</keyword>
<reference key="1">
    <citation type="submission" date="2006-11" db="EMBL/GenBank/DDBJ databases">
        <title>Identification and characterization of a new conjugation/ type IVA secretion system (trb/tra) of L. pneumophila Corby localized on a mobile genomic island.</title>
        <authorList>
            <person name="Gloeckner G."/>
            <person name="Albert-Weissenberger C."/>
            <person name="Weinmann E."/>
            <person name="Jacobi S."/>
            <person name="Schunder E."/>
            <person name="Steinert M."/>
            <person name="Buchrieser C."/>
            <person name="Hacker J."/>
            <person name="Heuner K."/>
        </authorList>
    </citation>
    <scope>NUCLEOTIDE SEQUENCE [LARGE SCALE GENOMIC DNA]</scope>
    <source>
        <strain>Corby</strain>
    </source>
</reference>
<accession>A5IBW2</accession>
<gene>
    <name evidence="1" type="primary">bioB</name>
    <name type="ordered locus">LPC_0886</name>
</gene>
<dbReference type="EC" id="2.8.1.6" evidence="1"/>
<dbReference type="EMBL" id="CP000675">
    <property type="protein sequence ID" value="ABQ54862.1"/>
    <property type="molecule type" value="Genomic_DNA"/>
</dbReference>
<dbReference type="RefSeq" id="WP_011946473.1">
    <property type="nucleotide sequence ID" value="NZ_JAPMSS010000002.1"/>
</dbReference>
<dbReference type="SMR" id="A5IBW2"/>
<dbReference type="KEGG" id="lpc:LPC_0886"/>
<dbReference type="HOGENOM" id="CLU_033172_1_2_6"/>
<dbReference type="UniPathway" id="UPA00078">
    <property type="reaction ID" value="UER00162"/>
</dbReference>
<dbReference type="GO" id="GO:0051537">
    <property type="term" value="F:2 iron, 2 sulfur cluster binding"/>
    <property type="evidence" value="ECO:0007669"/>
    <property type="project" value="UniProtKB-KW"/>
</dbReference>
<dbReference type="GO" id="GO:0051539">
    <property type="term" value="F:4 iron, 4 sulfur cluster binding"/>
    <property type="evidence" value="ECO:0007669"/>
    <property type="project" value="UniProtKB-KW"/>
</dbReference>
<dbReference type="GO" id="GO:0004076">
    <property type="term" value="F:biotin synthase activity"/>
    <property type="evidence" value="ECO:0007669"/>
    <property type="project" value="UniProtKB-UniRule"/>
</dbReference>
<dbReference type="GO" id="GO:0005506">
    <property type="term" value="F:iron ion binding"/>
    <property type="evidence" value="ECO:0007669"/>
    <property type="project" value="UniProtKB-UniRule"/>
</dbReference>
<dbReference type="GO" id="GO:0009102">
    <property type="term" value="P:biotin biosynthetic process"/>
    <property type="evidence" value="ECO:0007669"/>
    <property type="project" value="UniProtKB-UniRule"/>
</dbReference>
<dbReference type="CDD" id="cd01335">
    <property type="entry name" value="Radical_SAM"/>
    <property type="match status" value="1"/>
</dbReference>
<dbReference type="FunFam" id="3.20.20.70:FF:000011">
    <property type="entry name" value="Biotin synthase"/>
    <property type="match status" value="1"/>
</dbReference>
<dbReference type="Gene3D" id="3.20.20.70">
    <property type="entry name" value="Aldolase class I"/>
    <property type="match status" value="1"/>
</dbReference>
<dbReference type="HAMAP" id="MF_01694">
    <property type="entry name" value="BioB"/>
    <property type="match status" value="1"/>
</dbReference>
<dbReference type="InterPro" id="IPR013785">
    <property type="entry name" value="Aldolase_TIM"/>
</dbReference>
<dbReference type="InterPro" id="IPR010722">
    <property type="entry name" value="BATS_dom"/>
</dbReference>
<dbReference type="InterPro" id="IPR002684">
    <property type="entry name" value="Biotin_synth/BioAB"/>
</dbReference>
<dbReference type="InterPro" id="IPR024177">
    <property type="entry name" value="Biotin_synthase"/>
</dbReference>
<dbReference type="InterPro" id="IPR006638">
    <property type="entry name" value="Elp3/MiaA/NifB-like_rSAM"/>
</dbReference>
<dbReference type="InterPro" id="IPR007197">
    <property type="entry name" value="rSAM"/>
</dbReference>
<dbReference type="NCBIfam" id="TIGR00433">
    <property type="entry name" value="bioB"/>
    <property type="match status" value="1"/>
</dbReference>
<dbReference type="PANTHER" id="PTHR22976">
    <property type="entry name" value="BIOTIN SYNTHASE"/>
    <property type="match status" value="1"/>
</dbReference>
<dbReference type="PANTHER" id="PTHR22976:SF2">
    <property type="entry name" value="BIOTIN SYNTHASE, MITOCHONDRIAL"/>
    <property type="match status" value="1"/>
</dbReference>
<dbReference type="Pfam" id="PF06968">
    <property type="entry name" value="BATS"/>
    <property type="match status" value="1"/>
</dbReference>
<dbReference type="Pfam" id="PF04055">
    <property type="entry name" value="Radical_SAM"/>
    <property type="match status" value="1"/>
</dbReference>
<dbReference type="PIRSF" id="PIRSF001619">
    <property type="entry name" value="Biotin_synth"/>
    <property type="match status" value="1"/>
</dbReference>
<dbReference type="SFLD" id="SFLDG01060">
    <property type="entry name" value="BATS_domain_containing"/>
    <property type="match status" value="1"/>
</dbReference>
<dbReference type="SFLD" id="SFLDF00272">
    <property type="entry name" value="biotin_synthase"/>
    <property type="match status" value="1"/>
</dbReference>
<dbReference type="SMART" id="SM00876">
    <property type="entry name" value="BATS"/>
    <property type="match status" value="1"/>
</dbReference>
<dbReference type="SMART" id="SM00729">
    <property type="entry name" value="Elp3"/>
    <property type="match status" value="1"/>
</dbReference>
<dbReference type="SUPFAM" id="SSF102114">
    <property type="entry name" value="Radical SAM enzymes"/>
    <property type="match status" value="1"/>
</dbReference>
<dbReference type="PROSITE" id="PS51918">
    <property type="entry name" value="RADICAL_SAM"/>
    <property type="match status" value="1"/>
</dbReference>
<protein>
    <recommendedName>
        <fullName evidence="1">Biotin synthase</fullName>
        <ecNumber evidence="1">2.8.1.6</ecNumber>
    </recommendedName>
</protein>
<proteinExistence type="inferred from homology"/>
<sequence length="315" mass="35135">MSEENKQWSISDIEAIYQQPFNDLLYQAHTIHRTYHDPNSLQFATLLSIKTGACPEDCGYCSQSGHYKTHVEKEKLMSVEEVLQCAKEAKEGGAKRFCMGAAWRCPPDKAIPQLKEMIEGVKSLGLETCMTLGMLTKEQASHLKEAGLDYYNHNIDTSPSYYDKVVTTRKFSDRLDTLNNVRSAGINVCCGGILGLGETREDRIEFLLTLANMETPPESVPINRLIPVEGTPLAQAERVEGIELVRTIATARILMPKSAIRLTAGRTEMSDELQALCYFAGANSVFIGDKLLTEDNPQRFKDKTLFNKLGLTEMA</sequence>
<evidence type="ECO:0000255" key="1">
    <source>
        <dbReference type="HAMAP-Rule" id="MF_01694"/>
    </source>
</evidence>
<evidence type="ECO:0000255" key="2">
    <source>
        <dbReference type="PROSITE-ProRule" id="PRU01266"/>
    </source>
</evidence>
<name>BIOB_LEGPC</name>